<accession>Q7V2I1</accession>
<proteinExistence type="inferred from homology"/>
<dbReference type="EC" id="2.5.1.61" evidence="1"/>
<dbReference type="EMBL" id="BX548174">
    <property type="protein sequence ID" value="CAE18954.1"/>
    <property type="molecule type" value="Genomic_DNA"/>
</dbReference>
<dbReference type="RefSeq" id="WP_011132130.1">
    <property type="nucleotide sequence ID" value="NC_005072.1"/>
</dbReference>
<dbReference type="SMR" id="Q7V2I1"/>
<dbReference type="STRING" id="59919.PMM0495"/>
<dbReference type="KEGG" id="pmm:PMM0495"/>
<dbReference type="eggNOG" id="COG0181">
    <property type="taxonomic scope" value="Bacteria"/>
</dbReference>
<dbReference type="HOGENOM" id="CLU_019704_0_1_3"/>
<dbReference type="OrthoDB" id="9810298at2"/>
<dbReference type="UniPathway" id="UPA00251">
    <property type="reaction ID" value="UER00319"/>
</dbReference>
<dbReference type="UniPathway" id="UPA00668"/>
<dbReference type="Proteomes" id="UP000001026">
    <property type="component" value="Chromosome"/>
</dbReference>
<dbReference type="GO" id="GO:0005737">
    <property type="term" value="C:cytoplasm"/>
    <property type="evidence" value="ECO:0007669"/>
    <property type="project" value="TreeGrafter"/>
</dbReference>
<dbReference type="GO" id="GO:0004418">
    <property type="term" value="F:hydroxymethylbilane synthase activity"/>
    <property type="evidence" value="ECO:0007669"/>
    <property type="project" value="UniProtKB-UniRule"/>
</dbReference>
<dbReference type="GO" id="GO:0015995">
    <property type="term" value="P:chlorophyll biosynthetic process"/>
    <property type="evidence" value="ECO:0007669"/>
    <property type="project" value="UniProtKB-UniRule"/>
</dbReference>
<dbReference type="GO" id="GO:0006782">
    <property type="term" value="P:protoporphyrinogen IX biosynthetic process"/>
    <property type="evidence" value="ECO:0007669"/>
    <property type="project" value="UniProtKB-UniRule"/>
</dbReference>
<dbReference type="CDD" id="cd13645">
    <property type="entry name" value="PBP2_HuPBGD_like"/>
    <property type="match status" value="1"/>
</dbReference>
<dbReference type="FunFam" id="3.30.160.40:FF:000002">
    <property type="entry name" value="Porphobilinogen deaminase"/>
    <property type="match status" value="1"/>
</dbReference>
<dbReference type="FunFam" id="3.40.190.10:FF:000004">
    <property type="entry name" value="Porphobilinogen deaminase"/>
    <property type="match status" value="1"/>
</dbReference>
<dbReference type="FunFam" id="3.40.190.10:FF:000005">
    <property type="entry name" value="Porphobilinogen deaminase"/>
    <property type="match status" value="1"/>
</dbReference>
<dbReference type="Gene3D" id="3.40.190.10">
    <property type="entry name" value="Periplasmic binding protein-like II"/>
    <property type="match status" value="2"/>
</dbReference>
<dbReference type="Gene3D" id="3.30.160.40">
    <property type="entry name" value="Porphobilinogen deaminase, C-terminal domain"/>
    <property type="match status" value="1"/>
</dbReference>
<dbReference type="HAMAP" id="MF_00260">
    <property type="entry name" value="Porphobil_deam"/>
    <property type="match status" value="1"/>
</dbReference>
<dbReference type="InterPro" id="IPR000860">
    <property type="entry name" value="HemC"/>
</dbReference>
<dbReference type="InterPro" id="IPR022419">
    <property type="entry name" value="Porphobilin_deaminase_cofac_BS"/>
</dbReference>
<dbReference type="InterPro" id="IPR022417">
    <property type="entry name" value="Porphobilin_deaminase_N"/>
</dbReference>
<dbReference type="InterPro" id="IPR022418">
    <property type="entry name" value="Porphobilinogen_deaminase_C"/>
</dbReference>
<dbReference type="InterPro" id="IPR036803">
    <property type="entry name" value="Porphobilinogen_deaminase_C_sf"/>
</dbReference>
<dbReference type="NCBIfam" id="TIGR00212">
    <property type="entry name" value="hemC"/>
    <property type="match status" value="1"/>
</dbReference>
<dbReference type="PANTHER" id="PTHR11557">
    <property type="entry name" value="PORPHOBILINOGEN DEAMINASE"/>
    <property type="match status" value="1"/>
</dbReference>
<dbReference type="PANTHER" id="PTHR11557:SF0">
    <property type="entry name" value="PORPHOBILINOGEN DEAMINASE"/>
    <property type="match status" value="1"/>
</dbReference>
<dbReference type="Pfam" id="PF01379">
    <property type="entry name" value="Porphobil_deam"/>
    <property type="match status" value="1"/>
</dbReference>
<dbReference type="Pfam" id="PF03900">
    <property type="entry name" value="Porphobil_deamC"/>
    <property type="match status" value="1"/>
</dbReference>
<dbReference type="PIRSF" id="PIRSF001438">
    <property type="entry name" value="4pyrrol_synth_OHMeBilane_synth"/>
    <property type="match status" value="1"/>
</dbReference>
<dbReference type="PRINTS" id="PR00151">
    <property type="entry name" value="PORPHBDMNASE"/>
</dbReference>
<dbReference type="SUPFAM" id="SSF53850">
    <property type="entry name" value="Periplasmic binding protein-like II"/>
    <property type="match status" value="1"/>
</dbReference>
<dbReference type="SUPFAM" id="SSF54782">
    <property type="entry name" value="Porphobilinogen deaminase (hydroxymethylbilane synthase), C-terminal domain"/>
    <property type="match status" value="1"/>
</dbReference>
<dbReference type="PROSITE" id="PS00533">
    <property type="entry name" value="PORPHOBILINOGEN_DEAM"/>
    <property type="match status" value="1"/>
</dbReference>
<evidence type="ECO:0000255" key="1">
    <source>
        <dbReference type="HAMAP-Rule" id="MF_00260"/>
    </source>
</evidence>
<comment type="function">
    <text evidence="1">Tetrapolymerization of the monopyrrole PBG into the hydroxymethylbilane pre-uroporphyrinogen in several discrete steps.</text>
</comment>
<comment type="catalytic activity">
    <reaction evidence="1">
        <text>4 porphobilinogen + H2O = hydroxymethylbilane + 4 NH4(+)</text>
        <dbReference type="Rhea" id="RHEA:13185"/>
        <dbReference type="ChEBI" id="CHEBI:15377"/>
        <dbReference type="ChEBI" id="CHEBI:28938"/>
        <dbReference type="ChEBI" id="CHEBI:57845"/>
        <dbReference type="ChEBI" id="CHEBI:58126"/>
        <dbReference type="EC" id="2.5.1.61"/>
    </reaction>
</comment>
<comment type="cofactor">
    <cofactor evidence="1">
        <name>dipyrromethane</name>
        <dbReference type="ChEBI" id="CHEBI:60342"/>
    </cofactor>
    <text evidence="1">Binds 1 dipyrromethane group covalently.</text>
</comment>
<comment type="pathway">
    <text evidence="1">Porphyrin-containing compound metabolism; protoporphyrin-IX biosynthesis; coproporphyrinogen-III from 5-aminolevulinate: step 2/4.</text>
</comment>
<comment type="pathway">
    <text evidence="1">Porphyrin-containing compound metabolism; chlorophyll biosynthesis.</text>
</comment>
<comment type="subunit">
    <text evidence="1">Monomer.</text>
</comment>
<comment type="miscellaneous">
    <text evidence="1">The porphobilinogen subunits are added to the dipyrromethane group.</text>
</comment>
<comment type="similarity">
    <text evidence="1">Belongs to the HMBS family.</text>
</comment>
<sequence length="316" mass="34950">MTKFKLKIASRRSKLAMVQTLWVKEQLEKNIPDLEVSIEAMATQGDKILDVALAKIGDKGLFTKELEAQMLVGHADIAVHSLKDLPTNLPDGLTLGCITKREDPSDALVVNKKNKIYQLESLPPGSIVGTSSLRRLAQLRYKFPHLDFKDIRGNVITRIEKLDSGEFDCIILAAAGLKRLGFESRVHQIIPNEISLHAVGQGALGIECKSDDKEVLKIISVLEDKVSSQRCLAERSFLRELEGGCQVPIGVNSSIQNDEIALIGMVASIDGKRLIKNESIGNIKYPEEVGKKLAEKLKLQGADKILSEIFEQFRDK</sequence>
<protein>
    <recommendedName>
        <fullName evidence="1">Porphobilinogen deaminase</fullName>
        <shortName evidence="1">PBG</shortName>
        <ecNumber evidence="1">2.5.1.61</ecNumber>
    </recommendedName>
    <alternativeName>
        <fullName evidence="1">Hydroxymethylbilane synthase</fullName>
        <shortName evidence="1">HMBS</shortName>
    </alternativeName>
    <alternativeName>
        <fullName evidence="1">Pre-uroporphyrinogen synthase</fullName>
    </alternativeName>
</protein>
<keyword id="KW-0149">Chlorophyll biosynthesis</keyword>
<keyword id="KW-0627">Porphyrin biosynthesis</keyword>
<keyword id="KW-0808">Transferase</keyword>
<name>HEM3_PROMP</name>
<reference key="1">
    <citation type="journal article" date="2003" name="Nature">
        <title>Genome divergence in two Prochlorococcus ecotypes reflects oceanic niche differentiation.</title>
        <authorList>
            <person name="Rocap G."/>
            <person name="Larimer F.W."/>
            <person name="Lamerdin J.E."/>
            <person name="Malfatti S."/>
            <person name="Chain P."/>
            <person name="Ahlgren N.A."/>
            <person name="Arellano A."/>
            <person name="Coleman M."/>
            <person name="Hauser L."/>
            <person name="Hess W.R."/>
            <person name="Johnson Z.I."/>
            <person name="Land M.L."/>
            <person name="Lindell D."/>
            <person name="Post A.F."/>
            <person name="Regala W."/>
            <person name="Shah M."/>
            <person name="Shaw S.L."/>
            <person name="Steglich C."/>
            <person name="Sullivan M.B."/>
            <person name="Ting C.S."/>
            <person name="Tolonen A."/>
            <person name="Webb E.A."/>
            <person name="Zinser E.R."/>
            <person name="Chisholm S.W."/>
        </authorList>
    </citation>
    <scope>NUCLEOTIDE SEQUENCE [LARGE SCALE GENOMIC DNA]</scope>
    <source>
        <strain>CCMP1986 / NIES-2087 / MED4</strain>
    </source>
</reference>
<gene>
    <name evidence="1" type="primary">hemC</name>
    <name type="ordered locus">PMM0495</name>
</gene>
<feature type="chain" id="PRO_0000142973" description="Porphobilinogen deaminase">
    <location>
        <begin position="1"/>
        <end position="316"/>
    </location>
</feature>
<feature type="modified residue" description="S-(dipyrrolylmethanemethyl)cysteine" evidence="1">
    <location>
        <position position="245"/>
    </location>
</feature>
<organism>
    <name type="scientific">Prochlorococcus marinus subsp. pastoris (strain CCMP1986 / NIES-2087 / MED4)</name>
    <dbReference type="NCBI Taxonomy" id="59919"/>
    <lineage>
        <taxon>Bacteria</taxon>
        <taxon>Bacillati</taxon>
        <taxon>Cyanobacteriota</taxon>
        <taxon>Cyanophyceae</taxon>
        <taxon>Synechococcales</taxon>
        <taxon>Prochlorococcaceae</taxon>
        <taxon>Prochlorococcus</taxon>
    </lineage>
</organism>